<name>NANM_SHISS</name>
<organism>
    <name type="scientific">Shigella sonnei (strain Ss046)</name>
    <dbReference type="NCBI Taxonomy" id="300269"/>
    <lineage>
        <taxon>Bacteria</taxon>
        <taxon>Pseudomonadati</taxon>
        <taxon>Pseudomonadota</taxon>
        <taxon>Gammaproteobacteria</taxon>
        <taxon>Enterobacterales</taxon>
        <taxon>Enterobacteriaceae</taxon>
        <taxon>Shigella</taxon>
    </lineage>
</organism>
<feature type="signal peptide" evidence="1">
    <location>
        <begin position="1"/>
        <end position="19"/>
    </location>
</feature>
<feature type="chain" id="PRO_0000333072" description="N-acetylneuraminate epimerase">
    <location>
        <begin position="20"/>
        <end position="368"/>
    </location>
</feature>
<feature type="repeat" description="Kelch 1">
    <location>
        <begin position="40"/>
        <end position="84"/>
    </location>
</feature>
<feature type="repeat" description="Kelch 2">
    <location>
        <begin position="86"/>
        <end position="137"/>
    </location>
</feature>
<feature type="repeat" description="Kelch 3">
    <location>
        <begin position="139"/>
        <end position="173"/>
    </location>
</feature>
<feature type="repeat" description="Kelch 4">
    <location>
        <begin position="174"/>
        <end position="219"/>
    </location>
</feature>
<feature type="repeat" description="Kelch 5">
    <location>
        <begin position="222"/>
        <end position="265"/>
    </location>
</feature>
<feature type="repeat" description="Kelch 6">
    <location>
        <begin position="287"/>
        <end position="336"/>
    </location>
</feature>
<feature type="repeat" description="Kelch 7">
    <location>
        <begin position="338"/>
        <end position="367"/>
    </location>
</feature>
<feature type="active site" description="Proton acceptor" evidence="1">
    <location>
        <position position="228"/>
    </location>
</feature>
<keyword id="KW-0119">Carbohydrate metabolism</keyword>
<keyword id="KW-0413">Isomerase</keyword>
<keyword id="KW-0880">Kelch repeat</keyword>
<keyword id="KW-0574">Periplasm</keyword>
<keyword id="KW-1185">Reference proteome</keyword>
<keyword id="KW-0677">Repeat</keyword>
<keyword id="KW-0732">Signal</keyword>
<comment type="function">
    <text evidence="1">Converts alpha-N-acetylneuranimic acid (Neu5Ac) to the beta-anomer, accelerating the equilibrium between the alpha- and beta-anomers. Probably facilitates sialidase-negative bacteria to compete successfully for limited amounts of extracellular Neu5Ac, which is likely taken up in the beta-anomer. In addition, the rapid removal of sialic acid from solution might be advantageous to the bacterium to damp down host responses.</text>
</comment>
<comment type="catalytic activity">
    <reaction evidence="1">
        <text>N-acetyl-alpha-neuraminate = N-acetyl-beta-neuraminate</text>
        <dbReference type="Rhea" id="RHEA:25233"/>
        <dbReference type="ChEBI" id="CHEBI:58705"/>
        <dbReference type="ChEBI" id="CHEBI:58770"/>
        <dbReference type="EC" id="5.1.3.24"/>
    </reaction>
</comment>
<comment type="subunit">
    <text evidence="1">Homodimer.</text>
</comment>
<comment type="subcellular location">
    <subcellularLocation>
        <location evidence="1">Periplasm</location>
    </subcellularLocation>
</comment>
<comment type="similarity">
    <text evidence="1">Belongs to the NanM family.</text>
</comment>
<comment type="sequence caution" evidence="2">
    <conflict type="erroneous initiation">
        <sequence resource="EMBL-CDS" id="AAZ90949"/>
    </conflict>
</comment>
<accession>Q3YU63</accession>
<protein>
    <recommendedName>
        <fullName evidence="1">N-acetylneuraminate epimerase</fullName>
        <ecNumber evidence="1">5.1.3.24</ecNumber>
    </recommendedName>
    <alternativeName>
        <fullName evidence="1">N-acetylneuraminate mutarotase</fullName>
        <shortName evidence="1">Neu5Ac mutarotase</shortName>
    </alternativeName>
    <alternativeName>
        <fullName evidence="1">Sialic acid epimerase</fullName>
    </alternativeName>
</protein>
<gene>
    <name evidence="1" type="primary">nanM</name>
    <name type="ordered locus">SSON_4472</name>
</gene>
<evidence type="ECO:0000255" key="1">
    <source>
        <dbReference type="HAMAP-Rule" id="MF_01195"/>
    </source>
</evidence>
<evidence type="ECO:0000305" key="2"/>
<dbReference type="EC" id="5.1.3.24" evidence="1"/>
<dbReference type="EMBL" id="CP000038">
    <property type="protein sequence ID" value="AAZ90949.1"/>
    <property type="status" value="ALT_INIT"/>
    <property type="molecule type" value="Genomic_DNA"/>
</dbReference>
<dbReference type="RefSeq" id="WP_005139086.1">
    <property type="nucleotide sequence ID" value="NC_007384.1"/>
</dbReference>
<dbReference type="SMR" id="Q3YU63"/>
<dbReference type="GeneID" id="93777531"/>
<dbReference type="KEGG" id="ssn:SSON_4472"/>
<dbReference type="HOGENOM" id="CLU_061535_0_0_6"/>
<dbReference type="Proteomes" id="UP000002529">
    <property type="component" value="Chromosome"/>
</dbReference>
<dbReference type="GO" id="GO:0042597">
    <property type="term" value="C:periplasmic space"/>
    <property type="evidence" value="ECO:0007669"/>
    <property type="project" value="UniProtKB-SubCell"/>
</dbReference>
<dbReference type="GO" id="GO:0016857">
    <property type="term" value="F:racemase and epimerase activity, acting on carbohydrates and derivatives"/>
    <property type="evidence" value="ECO:0007669"/>
    <property type="project" value="UniProtKB-UniRule"/>
</dbReference>
<dbReference type="FunFam" id="2.120.10.80:FF:000061">
    <property type="entry name" value="N-acetylneuraminate epimerase"/>
    <property type="match status" value="1"/>
</dbReference>
<dbReference type="FunFam" id="2.120.10.80:FF:000067">
    <property type="entry name" value="N-acetylneuraminate epimerase"/>
    <property type="match status" value="1"/>
</dbReference>
<dbReference type="Gene3D" id="2.120.10.80">
    <property type="entry name" value="Kelch-type beta propeller"/>
    <property type="match status" value="2"/>
</dbReference>
<dbReference type="HAMAP" id="MF_01195">
    <property type="entry name" value="NanM"/>
    <property type="match status" value="1"/>
</dbReference>
<dbReference type="InterPro" id="IPR015915">
    <property type="entry name" value="Kelch-typ_b-propeller"/>
</dbReference>
<dbReference type="InterPro" id="IPR056734">
    <property type="entry name" value="NANM"/>
</dbReference>
<dbReference type="InterPro" id="IPR019936">
    <property type="entry name" value="NanM_proteobact"/>
</dbReference>
<dbReference type="NCBIfam" id="TIGR03547">
    <property type="entry name" value="muta_rot_YjhT"/>
    <property type="match status" value="1"/>
</dbReference>
<dbReference type="NCBIfam" id="NF010730">
    <property type="entry name" value="PRK14131.1"/>
    <property type="match status" value="1"/>
</dbReference>
<dbReference type="PANTHER" id="PTHR24412">
    <property type="entry name" value="KELCH PROTEIN"/>
    <property type="match status" value="1"/>
</dbReference>
<dbReference type="PANTHER" id="PTHR24412:SF489">
    <property type="entry name" value="RING FINGER DOMAIN AND KELCH REPEAT-CONTAINING PROTEIN DDB_G0271372"/>
    <property type="match status" value="1"/>
</dbReference>
<dbReference type="Pfam" id="PF24996">
    <property type="entry name" value="NANM"/>
    <property type="match status" value="1"/>
</dbReference>
<dbReference type="SUPFAM" id="SSF117281">
    <property type="entry name" value="Kelch motif"/>
    <property type="match status" value="1"/>
</dbReference>
<proteinExistence type="inferred from homology"/>
<sequence>MNKTIMALAIMMASFAANASVLPETPVPFKSGTGAIDNDTVYIGLGSAGTAWYKLDTQAKDKKWTALAAFPGGPRDQATSAFIDGNLYVFGGIGKNSEGLTQVFNDVHKYNPKTNSWVKLMSLAPMGMAGHVTFVHNGKAYVTGGVNQNIFNGYFEDLNEAGKDSTAIDKINAHYFDKKAEDYFFNKFLLSFDPSTQQWSYAGESPWYGTAGAAVVNKGDKTWLINGEAKPGLRTDAVFELDFTGNNLKWNKLDPVSSPDGVAGGFAGISNDSLIFAGGAGFKGSRENYQNGKNYAHEGLKKSYSTDIHLWHNGKWDKSGELSQGRAYGVSLPWNNSLLIIGGETAGGKAVTDSVLISVKDNKVTVQN</sequence>
<reference key="1">
    <citation type="journal article" date="2005" name="Nucleic Acids Res.">
        <title>Genome dynamics and diversity of Shigella species, the etiologic agents of bacillary dysentery.</title>
        <authorList>
            <person name="Yang F."/>
            <person name="Yang J."/>
            <person name="Zhang X."/>
            <person name="Chen L."/>
            <person name="Jiang Y."/>
            <person name="Yan Y."/>
            <person name="Tang X."/>
            <person name="Wang J."/>
            <person name="Xiong Z."/>
            <person name="Dong J."/>
            <person name="Xue Y."/>
            <person name="Zhu Y."/>
            <person name="Xu X."/>
            <person name="Sun L."/>
            <person name="Chen S."/>
            <person name="Nie H."/>
            <person name="Peng J."/>
            <person name="Xu J."/>
            <person name="Wang Y."/>
            <person name="Yuan Z."/>
            <person name="Wen Y."/>
            <person name="Yao Z."/>
            <person name="Shen Y."/>
            <person name="Qiang B."/>
            <person name="Hou Y."/>
            <person name="Yu J."/>
            <person name="Jin Q."/>
        </authorList>
    </citation>
    <scope>NUCLEOTIDE SEQUENCE [LARGE SCALE GENOMIC DNA]</scope>
    <source>
        <strain>Ss046</strain>
    </source>
</reference>